<dbReference type="EC" id="4.2.1.17" evidence="4"/>
<dbReference type="EMBL" id="Z97340">
    <property type="protein sequence ID" value="CAB10400.1"/>
    <property type="status" value="ALT_SEQ"/>
    <property type="molecule type" value="Genomic_DNA"/>
</dbReference>
<dbReference type="EMBL" id="AL161543">
    <property type="protein sequence ID" value="CAB78663.1"/>
    <property type="status" value="ALT_SEQ"/>
    <property type="molecule type" value="Genomic_DNA"/>
</dbReference>
<dbReference type="EMBL" id="CP002687">
    <property type="protein sequence ID" value="AEE83716.1"/>
    <property type="molecule type" value="Genomic_DNA"/>
</dbReference>
<dbReference type="EMBL" id="BT012519">
    <property type="protein sequence ID" value="AAS99663.1"/>
    <property type="molecule type" value="mRNA"/>
</dbReference>
<dbReference type="EMBL" id="BT014955">
    <property type="protein sequence ID" value="AAT47806.1"/>
    <property type="molecule type" value="mRNA"/>
</dbReference>
<dbReference type="PIR" id="F71428">
    <property type="entry name" value="F71428"/>
</dbReference>
<dbReference type="RefSeq" id="NP_193356.2">
    <property type="nucleotide sequence ID" value="NM_117717.5"/>
</dbReference>
<dbReference type="SMR" id="Q6NL24"/>
<dbReference type="FunCoup" id="Q6NL24">
    <property type="interactions" value="490"/>
</dbReference>
<dbReference type="STRING" id="3702.Q6NL24"/>
<dbReference type="iPTMnet" id="Q6NL24"/>
<dbReference type="MetOSite" id="Q6NL24"/>
<dbReference type="PaxDb" id="3702-AT4G16210.1"/>
<dbReference type="ProteomicsDB" id="224719"/>
<dbReference type="EnsemblPlants" id="AT4G16210.1">
    <property type="protein sequence ID" value="AT4G16210.1"/>
    <property type="gene ID" value="AT4G16210"/>
</dbReference>
<dbReference type="GeneID" id="827314"/>
<dbReference type="Gramene" id="AT4G16210.1">
    <property type="protein sequence ID" value="AT4G16210.1"/>
    <property type="gene ID" value="AT4G16210"/>
</dbReference>
<dbReference type="KEGG" id="ath:AT4G16210"/>
<dbReference type="Araport" id="AT4G16210"/>
<dbReference type="TAIR" id="AT4G16210">
    <property type="gene designation" value="ECHIA"/>
</dbReference>
<dbReference type="eggNOG" id="KOG1680">
    <property type="taxonomic scope" value="Eukaryota"/>
</dbReference>
<dbReference type="HOGENOM" id="CLU_009834_7_4_1"/>
<dbReference type="InParanoid" id="Q6NL24"/>
<dbReference type="OMA" id="SCDMVVC"/>
<dbReference type="OrthoDB" id="2018133at2759"/>
<dbReference type="PhylomeDB" id="Q6NL24"/>
<dbReference type="BioCyc" id="ARA:AT4G16210-MONOMER"/>
<dbReference type="UniPathway" id="UPA00659"/>
<dbReference type="CD-CODE" id="4299E36E">
    <property type="entry name" value="Nucleolus"/>
</dbReference>
<dbReference type="PRO" id="PR:Q6NL24"/>
<dbReference type="Proteomes" id="UP000006548">
    <property type="component" value="Chromosome 4"/>
</dbReference>
<dbReference type="ExpressionAtlas" id="Q6NL24">
    <property type="expression patterns" value="baseline and differential"/>
</dbReference>
<dbReference type="GO" id="GO:0005777">
    <property type="term" value="C:peroxisome"/>
    <property type="evidence" value="ECO:0007005"/>
    <property type="project" value="TAIR"/>
</dbReference>
<dbReference type="GO" id="GO:0004300">
    <property type="term" value="F:enoyl-CoA hydratase activity"/>
    <property type="evidence" value="ECO:0007669"/>
    <property type="project" value="UniProtKB-EC"/>
</dbReference>
<dbReference type="GO" id="GO:0006635">
    <property type="term" value="P:fatty acid beta-oxidation"/>
    <property type="evidence" value="ECO:0007669"/>
    <property type="project" value="UniProtKB-UniPathway"/>
</dbReference>
<dbReference type="CDD" id="cd06558">
    <property type="entry name" value="crotonase-like"/>
    <property type="match status" value="1"/>
</dbReference>
<dbReference type="FunFam" id="3.90.226.10:FF:000054">
    <property type="entry name" value="probable enoyl-CoA hydratase 1, peroxisomal"/>
    <property type="match status" value="1"/>
</dbReference>
<dbReference type="Gene3D" id="3.90.226.10">
    <property type="entry name" value="2-enoyl-CoA Hydratase, Chain A, domain 1"/>
    <property type="match status" value="1"/>
</dbReference>
<dbReference type="InterPro" id="IPR029045">
    <property type="entry name" value="ClpP/crotonase-like_dom_sf"/>
</dbReference>
<dbReference type="InterPro" id="IPR001753">
    <property type="entry name" value="Enoyl-CoA_hydra/iso"/>
</dbReference>
<dbReference type="NCBIfam" id="NF004840">
    <property type="entry name" value="PRK06190.1"/>
    <property type="match status" value="1"/>
</dbReference>
<dbReference type="PANTHER" id="PTHR43802">
    <property type="entry name" value="ENOYL-COA HYDRATASE"/>
    <property type="match status" value="1"/>
</dbReference>
<dbReference type="PANTHER" id="PTHR43802:SF1">
    <property type="entry name" value="IP11341P-RELATED"/>
    <property type="match status" value="1"/>
</dbReference>
<dbReference type="Pfam" id="PF00378">
    <property type="entry name" value="ECH_1"/>
    <property type="match status" value="1"/>
</dbReference>
<dbReference type="SUPFAM" id="SSF52096">
    <property type="entry name" value="ClpP/crotonase"/>
    <property type="match status" value="1"/>
</dbReference>
<accession>Q6NL24</accession>
<accession>O23468</accession>
<sequence>MDQTVSENLIQVKKESGGIAVITINRPKSLNSLTRAMMVDLAKAFKDMDSDESVQVVIFTGSGRSFCSGVDLTAAESVFKGDVKDPETDPVVQMERLRKPIIGAINGFAITAGFELALACDILVASRGAKFMDTHARFGIFPSWGLSQKLSRIIGANKAREVSLTSMPLTADVAGKLGFVNHVVEEGEALKKAREIAEAIIKNEQGMVLRIKSVINDGLKLDLGHALTLEKERAHAYYSGMTKEQFRKMQEFIAGRGSKKPSSKL</sequence>
<evidence type="ECO:0000250" key="1">
    <source>
        <dbReference type="UniProtKB" id="P30084"/>
    </source>
</evidence>
<evidence type="ECO:0000250" key="2">
    <source>
        <dbReference type="UniProtKB" id="P42126"/>
    </source>
</evidence>
<evidence type="ECO:0000303" key="3">
    <source>
    </source>
</evidence>
<evidence type="ECO:0000305" key="4"/>
<evidence type="ECO:0000305" key="5">
    <source>
    </source>
</evidence>
<evidence type="ECO:0000312" key="6">
    <source>
        <dbReference type="Araport" id="AT4G16210"/>
    </source>
</evidence>
<evidence type="ECO:0000312" key="7">
    <source>
        <dbReference type="EMBL" id="CAB10400.1"/>
    </source>
</evidence>
<evidence type="ECO:0007744" key="8">
    <source>
    </source>
</evidence>
<comment type="function">
    <text evidence="1">Straight-chain enoyl-CoA thioesters from C4 up to at least C16 are processed, although with decreasing catalytic rate.</text>
</comment>
<comment type="catalytic activity">
    <reaction evidence="4">
        <text>a (3S)-3-hydroxyacyl-CoA = a (2E)-enoyl-CoA + H2O</text>
        <dbReference type="Rhea" id="RHEA:16105"/>
        <dbReference type="ChEBI" id="CHEBI:15377"/>
        <dbReference type="ChEBI" id="CHEBI:57318"/>
        <dbReference type="ChEBI" id="CHEBI:58856"/>
        <dbReference type="EC" id="4.2.1.17"/>
    </reaction>
</comment>
<comment type="catalytic activity">
    <reaction evidence="4">
        <text>a 4-saturated-(3S)-3-hydroxyacyl-CoA = a (3E)-enoyl-CoA + H2O</text>
        <dbReference type="Rhea" id="RHEA:20724"/>
        <dbReference type="ChEBI" id="CHEBI:15377"/>
        <dbReference type="ChEBI" id="CHEBI:58521"/>
        <dbReference type="ChEBI" id="CHEBI:137480"/>
        <dbReference type="EC" id="4.2.1.17"/>
    </reaction>
</comment>
<comment type="pathway">
    <text evidence="4">Lipid metabolism; fatty acid beta-oxidation.</text>
</comment>
<comment type="subcellular location">
    <subcellularLocation>
        <location evidence="5">Peroxisome</location>
    </subcellularLocation>
</comment>
<comment type="similarity">
    <text evidence="4">Belongs to the enoyl-CoA hydratase/isomerase family.</text>
</comment>
<comment type="sequence caution" evidence="4">
    <conflict type="erroneous gene model prediction">
        <sequence resource="EMBL-CDS" id="CAB10400"/>
    </conflict>
</comment>
<comment type="sequence caution" evidence="4">
    <conflict type="erroneous gene model prediction">
        <sequence resource="EMBL-CDS" id="CAB78663"/>
    </conflict>
</comment>
<gene>
    <name evidence="3" type="primary">ECHIA</name>
    <name evidence="6" type="ordered locus">At4g16210</name>
    <name evidence="7" type="ORF">dl4145c</name>
</gene>
<name>ECH1P_ARATH</name>
<organism>
    <name type="scientific">Arabidopsis thaliana</name>
    <name type="common">Mouse-ear cress</name>
    <dbReference type="NCBI Taxonomy" id="3702"/>
    <lineage>
        <taxon>Eukaryota</taxon>
        <taxon>Viridiplantae</taxon>
        <taxon>Streptophyta</taxon>
        <taxon>Embryophyta</taxon>
        <taxon>Tracheophyta</taxon>
        <taxon>Spermatophyta</taxon>
        <taxon>Magnoliopsida</taxon>
        <taxon>eudicotyledons</taxon>
        <taxon>Gunneridae</taxon>
        <taxon>Pentapetalae</taxon>
        <taxon>rosids</taxon>
        <taxon>malvids</taxon>
        <taxon>Brassicales</taxon>
        <taxon>Brassicaceae</taxon>
        <taxon>Camelineae</taxon>
        <taxon>Arabidopsis</taxon>
    </lineage>
</organism>
<keyword id="KW-0007">Acetylation</keyword>
<keyword id="KW-0276">Fatty acid metabolism</keyword>
<keyword id="KW-0443">Lipid metabolism</keyword>
<keyword id="KW-0456">Lyase</keyword>
<keyword id="KW-0576">Peroxisome</keyword>
<keyword id="KW-1185">Reference proteome</keyword>
<feature type="chain" id="PRO_0000435429" description="Probable enoyl-CoA hydratase 1, peroxisomal">
    <location>
        <begin position="1"/>
        <end position="265"/>
    </location>
</feature>
<feature type="short sequence motif" description="Microbody targeting signal" evidence="4">
    <location>
        <begin position="263"/>
        <end position="265"/>
    </location>
</feature>
<feature type="binding site" evidence="2">
    <location>
        <begin position="68"/>
        <end position="72"/>
    </location>
    <ligand>
        <name>substrate</name>
    </ligand>
</feature>
<feature type="binding site" evidence="2">
    <location>
        <position position="112"/>
    </location>
    <ligand>
        <name>substrate</name>
    </ligand>
</feature>
<feature type="site" description="Important for catalytic activity" evidence="2">
    <location>
        <position position="135"/>
    </location>
</feature>
<feature type="modified residue" description="N-acetylmethionine" evidence="8">
    <location>
        <position position="1"/>
    </location>
</feature>
<reference key="1">
    <citation type="journal article" date="1998" name="Nature">
        <title>Analysis of 1.9 Mb of contiguous sequence from chromosome 4 of Arabidopsis thaliana.</title>
        <authorList>
            <person name="Bevan M."/>
            <person name="Bancroft I."/>
            <person name="Bent E."/>
            <person name="Love K."/>
            <person name="Goodman H.M."/>
            <person name="Dean C."/>
            <person name="Bergkamp R."/>
            <person name="Dirkse W."/>
            <person name="van Staveren M."/>
            <person name="Stiekema W."/>
            <person name="Drost L."/>
            <person name="Ridley P."/>
            <person name="Hudson S.-A."/>
            <person name="Patel K."/>
            <person name="Murphy G."/>
            <person name="Piffanelli P."/>
            <person name="Wedler H."/>
            <person name="Wedler E."/>
            <person name="Wambutt R."/>
            <person name="Weitzenegger T."/>
            <person name="Pohl T."/>
            <person name="Terryn N."/>
            <person name="Gielen J."/>
            <person name="Villarroel R."/>
            <person name="De Clercq R."/>
            <person name="van Montagu M."/>
            <person name="Lecharny A."/>
            <person name="Aubourg S."/>
            <person name="Gy I."/>
            <person name="Kreis M."/>
            <person name="Lao N."/>
            <person name="Kavanagh T."/>
            <person name="Hempel S."/>
            <person name="Kotter P."/>
            <person name="Entian K.-D."/>
            <person name="Rieger M."/>
            <person name="Schaefer M."/>
            <person name="Funk B."/>
            <person name="Mueller-Auer S."/>
            <person name="Silvey M."/>
            <person name="James R."/>
            <person name="Monfort A."/>
            <person name="Pons A."/>
            <person name="Puigdomenech P."/>
            <person name="Douka A."/>
            <person name="Voukelatou E."/>
            <person name="Milioni D."/>
            <person name="Hatzopoulos P."/>
            <person name="Piravandi E."/>
            <person name="Obermaier B."/>
            <person name="Hilbert H."/>
            <person name="Duesterhoeft A."/>
            <person name="Moores T."/>
            <person name="Jones J.D.G."/>
            <person name="Eneva T."/>
            <person name="Palme K."/>
            <person name="Benes V."/>
            <person name="Rechmann S."/>
            <person name="Ansorge W."/>
            <person name="Cooke R."/>
            <person name="Berger C."/>
            <person name="Delseny M."/>
            <person name="Voet M."/>
            <person name="Volckaert G."/>
            <person name="Mewes H.-W."/>
            <person name="Klosterman S."/>
            <person name="Schueller C."/>
            <person name="Chalwatzis N."/>
        </authorList>
    </citation>
    <scope>NUCLEOTIDE SEQUENCE [LARGE SCALE GENOMIC DNA]</scope>
    <source>
        <strain>cv. Columbia</strain>
    </source>
</reference>
<reference key="2">
    <citation type="journal article" date="1999" name="Nature">
        <title>Sequence and analysis of chromosome 4 of the plant Arabidopsis thaliana.</title>
        <authorList>
            <person name="Mayer K.F.X."/>
            <person name="Schueller C."/>
            <person name="Wambutt R."/>
            <person name="Murphy G."/>
            <person name="Volckaert G."/>
            <person name="Pohl T."/>
            <person name="Duesterhoeft A."/>
            <person name="Stiekema W."/>
            <person name="Entian K.-D."/>
            <person name="Terryn N."/>
            <person name="Harris B."/>
            <person name="Ansorge W."/>
            <person name="Brandt P."/>
            <person name="Grivell L.A."/>
            <person name="Rieger M."/>
            <person name="Weichselgartner M."/>
            <person name="de Simone V."/>
            <person name="Obermaier B."/>
            <person name="Mache R."/>
            <person name="Mueller M."/>
            <person name="Kreis M."/>
            <person name="Delseny M."/>
            <person name="Puigdomenech P."/>
            <person name="Watson M."/>
            <person name="Schmidtheini T."/>
            <person name="Reichert B."/>
            <person name="Portetelle D."/>
            <person name="Perez-Alonso M."/>
            <person name="Boutry M."/>
            <person name="Bancroft I."/>
            <person name="Vos P."/>
            <person name="Hoheisel J."/>
            <person name="Zimmermann W."/>
            <person name="Wedler H."/>
            <person name="Ridley P."/>
            <person name="Langham S.-A."/>
            <person name="McCullagh B."/>
            <person name="Bilham L."/>
            <person name="Robben J."/>
            <person name="van der Schueren J."/>
            <person name="Grymonprez B."/>
            <person name="Chuang Y.-J."/>
            <person name="Vandenbussche F."/>
            <person name="Braeken M."/>
            <person name="Weltjens I."/>
            <person name="Voet M."/>
            <person name="Bastiaens I."/>
            <person name="Aert R."/>
            <person name="Defoor E."/>
            <person name="Weitzenegger T."/>
            <person name="Bothe G."/>
            <person name="Ramsperger U."/>
            <person name="Hilbert H."/>
            <person name="Braun M."/>
            <person name="Holzer E."/>
            <person name="Brandt A."/>
            <person name="Peters S."/>
            <person name="van Staveren M."/>
            <person name="Dirkse W."/>
            <person name="Mooijman P."/>
            <person name="Klein Lankhorst R."/>
            <person name="Rose M."/>
            <person name="Hauf J."/>
            <person name="Koetter P."/>
            <person name="Berneiser S."/>
            <person name="Hempel S."/>
            <person name="Feldpausch M."/>
            <person name="Lamberth S."/>
            <person name="Van den Daele H."/>
            <person name="De Keyser A."/>
            <person name="Buysshaert C."/>
            <person name="Gielen J."/>
            <person name="Villarroel R."/>
            <person name="De Clercq R."/>
            <person name="van Montagu M."/>
            <person name="Rogers J."/>
            <person name="Cronin A."/>
            <person name="Quail M.A."/>
            <person name="Bray-Allen S."/>
            <person name="Clark L."/>
            <person name="Doggett J."/>
            <person name="Hall S."/>
            <person name="Kay M."/>
            <person name="Lennard N."/>
            <person name="McLay K."/>
            <person name="Mayes R."/>
            <person name="Pettett A."/>
            <person name="Rajandream M.A."/>
            <person name="Lyne M."/>
            <person name="Benes V."/>
            <person name="Rechmann S."/>
            <person name="Borkova D."/>
            <person name="Bloecker H."/>
            <person name="Scharfe M."/>
            <person name="Grimm M."/>
            <person name="Loehnert T.-H."/>
            <person name="Dose S."/>
            <person name="de Haan M."/>
            <person name="Maarse A.C."/>
            <person name="Schaefer M."/>
            <person name="Mueller-Auer S."/>
            <person name="Gabel C."/>
            <person name="Fuchs M."/>
            <person name="Fartmann B."/>
            <person name="Granderath K."/>
            <person name="Dauner D."/>
            <person name="Herzl A."/>
            <person name="Neumann S."/>
            <person name="Argiriou A."/>
            <person name="Vitale D."/>
            <person name="Liguori R."/>
            <person name="Piravandi E."/>
            <person name="Massenet O."/>
            <person name="Quigley F."/>
            <person name="Clabauld G."/>
            <person name="Muendlein A."/>
            <person name="Felber R."/>
            <person name="Schnabl S."/>
            <person name="Hiller R."/>
            <person name="Schmidt W."/>
            <person name="Lecharny A."/>
            <person name="Aubourg S."/>
            <person name="Chefdor F."/>
            <person name="Cooke R."/>
            <person name="Berger C."/>
            <person name="Monfort A."/>
            <person name="Casacuberta E."/>
            <person name="Gibbons T."/>
            <person name="Weber N."/>
            <person name="Vandenbol M."/>
            <person name="Bargues M."/>
            <person name="Terol J."/>
            <person name="Torres A."/>
            <person name="Perez-Perez A."/>
            <person name="Purnelle B."/>
            <person name="Bent E."/>
            <person name="Johnson S."/>
            <person name="Tacon D."/>
            <person name="Jesse T."/>
            <person name="Heijnen L."/>
            <person name="Schwarz S."/>
            <person name="Scholler P."/>
            <person name="Heber S."/>
            <person name="Francs P."/>
            <person name="Bielke C."/>
            <person name="Frishman D."/>
            <person name="Haase D."/>
            <person name="Lemcke K."/>
            <person name="Mewes H.-W."/>
            <person name="Stocker S."/>
            <person name="Zaccaria P."/>
            <person name="Bevan M."/>
            <person name="Wilson R.K."/>
            <person name="de la Bastide M."/>
            <person name="Habermann K."/>
            <person name="Parnell L."/>
            <person name="Dedhia N."/>
            <person name="Gnoj L."/>
            <person name="Schutz K."/>
            <person name="Huang E."/>
            <person name="Spiegel L."/>
            <person name="Sekhon M."/>
            <person name="Murray J."/>
            <person name="Sheet P."/>
            <person name="Cordes M."/>
            <person name="Abu-Threideh J."/>
            <person name="Stoneking T."/>
            <person name="Kalicki J."/>
            <person name="Graves T."/>
            <person name="Harmon G."/>
            <person name="Edwards J."/>
            <person name="Latreille P."/>
            <person name="Courtney L."/>
            <person name="Cloud J."/>
            <person name="Abbott A."/>
            <person name="Scott K."/>
            <person name="Johnson D."/>
            <person name="Minx P."/>
            <person name="Bentley D."/>
            <person name="Fulton B."/>
            <person name="Miller N."/>
            <person name="Greco T."/>
            <person name="Kemp K."/>
            <person name="Kramer J."/>
            <person name="Fulton L."/>
            <person name="Mardis E."/>
            <person name="Dante M."/>
            <person name="Pepin K."/>
            <person name="Hillier L.W."/>
            <person name="Nelson J."/>
            <person name="Spieth J."/>
            <person name="Ryan E."/>
            <person name="Andrews S."/>
            <person name="Geisel C."/>
            <person name="Layman D."/>
            <person name="Du H."/>
            <person name="Ali J."/>
            <person name="Berghoff A."/>
            <person name="Jones K."/>
            <person name="Drone K."/>
            <person name="Cotton M."/>
            <person name="Joshu C."/>
            <person name="Antonoiu B."/>
            <person name="Zidanic M."/>
            <person name="Strong C."/>
            <person name="Sun H."/>
            <person name="Lamar B."/>
            <person name="Yordan C."/>
            <person name="Ma P."/>
            <person name="Zhong J."/>
            <person name="Preston R."/>
            <person name="Vil D."/>
            <person name="Shekher M."/>
            <person name="Matero A."/>
            <person name="Shah R."/>
            <person name="Swaby I.K."/>
            <person name="O'Shaughnessy A."/>
            <person name="Rodriguez M."/>
            <person name="Hoffman J."/>
            <person name="Till S."/>
            <person name="Granat S."/>
            <person name="Shohdy N."/>
            <person name="Hasegawa A."/>
            <person name="Hameed A."/>
            <person name="Lodhi M."/>
            <person name="Johnson A."/>
            <person name="Chen E."/>
            <person name="Marra M.A."/>
            <person name="Martienssen R."/>
            <person name="McCombie W.R."/>
        </authorList>
    </citation>
    <scope>NUCLEOTIDE SEQUENCE [LARGE SCALE GENOMIC DNA]</scope>
    <source>
        <strain>cv. Columbia</strain>
    </source>
</reference>
<reference key="3">
    <citation type="journal article" date="2017" name="Plant J.">
        <title>Araport11: a complete reannotation of the Arabidopsis thaliana reference genome.</title>
        <authorList>
            <person name="Cheng C.Y."/>
            <person name="Krishnakumar V."/>
            <person name="Chan A.P."/>
            <person name="Thibaud-Nissen F."/>
            <person name="Schobel S."/>
            <person name="Town C.D."/>
        </authorList>
    </citation>
    <scope>GENOME REANNOTATION</scope>
    <source>
        <strain>cv. Columbia</strain>
    </source>
</reference>
<reference key="4">
    <citation type="submission" date="2004-06" db="EMBL/GenBank/DDBJ databases">
        <title>Arabidopsis ORF clones.</title>
        <authorList>
            <person name="Cheuk R.F."/>
            <person name="Chen H."/>
            <person name="Kim C.J."/>
            <person name="Shinn P."/>
            <person name="Ecker J.R."/>
        </authorList>
    </citation>
    <scope>NUCLEOTIDE SEQUENCE [LARGE SCALE MRNA]</scope>
    <source>
        <strain>cv. Columbia</strain>
    </source>
</reference>
<reference key="5">
    <citation type="journal article" date="2007" name="Plant Cell">
        <title>Proteome analysis of Arabidopsis leaf peroxisomes reveals novel targeting peptides, metabolic pathways, and defense mechanisms.</title>
        <authorList>
            <person name="Reumann S."/>
            <person name="Babujee L."/>
            <person name="Ma C."/>
            <person name="Wienkoop S."/>
            <person name="Siemsen T."/>
            <person name="Antonicelli G.E."/>
            <person name="Rasche N."/>
            <person name="Lueder F."/>
            <person name="Weckwerth W."/>
            <person name="Jahn O."/>
        </authorList>
    </citation>
    <scope>SUBCELLULAR LOCATION</scope>
</reference>
<reference key="6">
    <citation type="journal article" date="2012" name="Mol. Cell. Proteomics">
        <title>Comparative large-scale characterisation of plant vs. mammal proteins reveals similar and idiosyncratic N-alpha acetylation features.</title>
        <authorList>
            <person name="Bienvenut W.V."/>
            <person name="Sumpton D."/>
            <person name="Martinez A."/>
            <person name="Lilla S."/>
            <person name="Espagne C."/>
            <person name="Meinnel T."/>
            <person name="Giglione C."/>
        </authorList>
    </citation>
    <scope>ACETYLATION [LARGE SCALE ANALYSIS] AT MET-1</scope>
    <scope>IDENTIFICATION BY MASS SPECTROMETRY [LARGE SCALE ANALYSIS]</scope>
</reference>
<protein>
    <recommendedName>
        <fullName evidence="4">Probable enoyl-CoA hydratase 1, peroxisomal</fullName>
        <ecNumber evidence="4">4.2.1.17</ecNumber>
    </recommendedName>
    <alternativeName>
        <fullName evidence="3">Enoyl-CoA hydratase isoform A</fullName>
    </alternativeName>
</protein>
<proteinExistence type="evidence at protein level"/>